<name>Y1590_METJA</name>
<accession>Q58985</accession>
<sequence length="105" mass="11685">MRISPLIAGLIGGFTAAILQALFKVFPPPAYGICIACHTRDLVNWIINHLFGTTLGMALVSKAFPVLTVVGIFIGALITTFIYKETELKQTHSPVYWFHIRNFSY</sequence>
<gene>
    <name type="ordered locus">MJ1590</name>
</gene>
<keyword id="KW-1003">Cell membrane</keyword>
<keyword id="KW-0472">Membrane</keyword>
<keyword id="KW-1185">Reference proteome</keyword>
<keyword id="KW-0812">Transmembrane</keyword>
<keyword id="KW-1133">Transmembrane helix</keyword>
<reference key="1">
    <citation type="journal article" date="1996" name="Science">
        <title>Complete genome sequence of the methanogenic archaeon, Methanococcus jannaschii.</title>
        <authorList>
            <person name="Bult C.J."/>
            <person name="White O."/>
            <person name="Olsen G.J."/>
            <person name="Zhou L."/>
            <person name="Fleischmann R.D."/>
            <person name="Sutton G.G."/>
            <person name="Blake J.A."/>
            <person name="FitzGerald L.M."/>
            <person name="Clayton R.A."/>
            <person name="Gocayne J.D."/>
            <person name="Kerlavage A.R."/>
            <person name="Dougherty B.A."/>
            <person name="Tomb J.-F."/>
            <person name="Adams M.D."/>
            <person name="Reich C.I."/>
            <person name="Overbeek R."/>
            <person name="Kirkness E.F."/>
            <person name="Weinstock K.G."/>
            <person name="Merrick J.M."/>
            <person name="Glodek A."/>
            <person name="Scott J.L."/>
            <person name="Geoghagen N.S.M."/>
            <person name="Weidman J.F."/>
            <person name="Fuhrmann J.L."/>
            <person name="Nguyen D."/>
            <person name="Utterback T.R."/>
            <person name="Kelley J.M."/>
            <person name="Peterson J.D."/>
            <person name="Sadow P.W."/>
            <person name="Hanna M.C."/>
            <person name="Cotton M.D."/>
            <person name="Roberts K.M."/>
            <person name="Hurst M.A."/>
            <person name="Kaine B.P."/>
            <person name="Borodovsky M."/>
            <person name="Klenk H.-P."/>
            <person name="Fraser C.M."/>
            <person name="Smith H.O."/>
            <person name="Woese C.R."/>
            <person name="Venter J.C."/>
        </authorList>
    </citation>
    <scope>NUCLEOTIDE SEQUENCE [LARGE SCALE GENOMIC DNA]</scope>
    <source>
        <strain>ATCC 43067 / DSM 2661 / JAL-1 / JCM 10045 / NBRC 100440</strain>
    </source>
</reference>
<comment type="subcellular location">
    <subcellularLocation>
        <location evidence="2">Cell membrane</location>
        <topology evidence="2">Multi-pass membrane protein</topology>
    </subcellularLocation>
</comment>
<proteinExistence type="predicted"/>
<dbReference type="EMBL" id="L77117">
    <property type="protein sequence ID" value="AAB99618.1"/>
    <property type="molecule type" value="Genomic_DNA"/>
</dbReference>
<dbReference type="PIR" id="E64498">
    <property type="entry name" value="E64498"/>
</dbReference>
<dbReference type="STRING" id="243232.MJ_1590"/>
<dbReference type="PaxDb" id="243232-MJ_1590"/>
<dbReference type="EnsemblBacteria" id="AAB99618">
    <property type="protein sequence ID" value="AAB99618"/>
    <property type="gene ID" value="MJ_1590"/>
</dbReference>
<dbReference type="KEGG" id="mja:MJ_1590"/>
<dbReference type="eggNOG" id="arCOG05117">
    <property type="taxonomic scope" value="Archaea"/>
</dbReference>
<dbReference type="HOGENOM" id="CLU_2230392_0_0_2"/>
<dbReference type="InParanoid" id="Q58985"/>
<dbReference type="Proteomes" id="UP000000805">
    <property type="component" value="Chromosome"/>
</dbReference>
<dbReference type="GO" id="GO:0005886">
    <property type="term" value="C:plasma membrane"/>
    <property type="evidence" value="ECO:0007669"/>
    <property type="project" value="UniProtKB-SubCell"/>
</dbReference>
<feature type="chain" id="PRO_0000107431" description="Uncharacterized protein MJ1590">
    <location>
        <begin position="1"/>
        <end position="105"/>
    </location>
</feature>
<feature type="transmembrane region" description="Helical" evidence="1">
    <location>
        <begin position="3"/>
        <end position="23"/>
    </location>
</feature>
<feature type="transmembrane region" description="Helical" evidence="1">
    <location>
        <begin position="41"/>
        <end position="61"/>
    </location>
</feature>
<feature type="transmembrane region" description="Helical" evidence="1">
    <location>
        <begin position="63"/>
        <end position="83"/>
    </location>
</feature>
<protein>
    <recommendedName>
        <fullName>Uncharacterized protein MJ1590</fullName>
    </recommendedName>
</protein>
<evidence type="ECO:0000255" key="1"/>
<evidence type="ECO:0000305" key="2"/>
<organism>
    <name type="scientific">Methanocaldococcus jannaschii (strain ATCC 43067 / DSM 2661 / JAL-1 / JCM 10045 / NBRC 100440)</name>
    <name type="common">Methanococcus jannaschii</name>
    <dbReference type="NCBI Taxonomy" id="243232"/>
    <lineage>
        <taxon>Archaea</taxon>
        <taxon>Methanobacteriati</taxon>
        <taxon>Methanobacteriota</taxon>
        <taxon>Methanomada group</taxon>
        <taxon>Methanococci</taxon>
        <taxon>Methanococcales</taxon>
        <taxon>Methanocaldococcaceae</taxon>
        <taxon>Methanocaldococcus</taxon>
    </lineage>
</organism>